<gene>
    <name type="primary">VEGFB</name>
    <name type="synonym">VRF</name>
</gene>
<evidence type="ECO:0000250" key="1"/>
<evidence type="ECO:0000255" key="2"/>
<evidence type="ECO:0000256" key="3">
    <source>
        <dbReference type="SAM" id="MobiDB-lite"/>
    </source>
</evidence>
<evidence type="ECO:0000305" key="4"/>
<sequence length="207" mass="21655">MSPLLRRLLLAVLLQLAPAQAPVSQPDAPGHQKKVVSWIDVYARATCQPREVVVPLNMELMGTVAKQLVPSCVTVQRCGGCCPDDGLECVPTGQHQVRMQILMIQYPSSQLGEMSLEEHSQCECRPKKRESAVKPDRASTPHHRPQPRSVPGWDPAPGAPSPADITHPTPAPGPSAHAAPSAASALTPGPATAAADAAASSVVKGGA</sequence>
<accession>Q9XS49</accession>
<accession>Q9GLX2</accession>
<accession>Q9XS48</accession>
<organism>
    <name type="scientific">Bos taurus</name>
    <name type="common">Bovine</name>
    <dbReference type="NCBI Taxonomy" id="9913"/>
    <lineage>
        <taxon>Eukaryota</taxon>
        <taxon>Metazoa</taxon>
        <taxon>Chordata</taxon>
        <taxon>Craniata</taxon>
        <taxon>Vertebrata</taxon>
        <taxon>Euteleostomi</taxon>
        <taxon>Mammalia</taxon>
        <taxon>Eutheria</taxon>
        <taxon>Laurasiatheria</taxon>
        <taxon>Artiodactyla</taxon>
        <taxon>Ruminantia</taxon>
        <taxon>Pecora</taxon>
        <taxon>Bovidae</taxon>
        <taxon>Bovinae</taxon>
        <taxon>Bos</taxon>
    </lineage>
</organism>
<name>VEGFB_BOVIN</name>
<protein>
    <recommendedName>
        <fullName>Vascular endothelial growth factor B</fullName>
        <shortName>VEGF-B</shortName>
    </recommendedName>
    <alternativeName>
        <fullName>VEGF-related factor</fullName>
        <shortName>VRF</shortName>
    </alternativeName>
</protein>
<feature type="signal peptide" evidence="2">
    <location>
        <begin position="1"/>
        <end position="21"/>
    </location>
</feature>
<feature type="chain" id="PRO_0000023397" description="Vascular endothelial growth factor B">
    <location>
        <begin position="22"/>
        <end position="207"/>
    </location>
</feature>
<feature type="region of interest" description="Disordered" evidence="3">
    <location>
        <begin position="124"/>
        <end position="207"/>
    </location>
</feature>
<feature type="compositionally biased region" description="Basic and acidic residues" evidence="3">
    <location>
        <begin position="124"/>
        <end position="139"/>
    </location>
</feature>
<feature type="compositionally biased region" description="Low complexity" evidence="3">
    <location>
        <begin position="174"/>
        <end position="201"/>
    </location>
</feature>
<feature type="disulfide bond" evidence="1">
    <location>
        <begin position="47"/>
        <end position="89"/>
    </location>
</feature>
<feature type="disulfide bond" description="Interchain" evidence="1">
    <location>
        <position position="72"/>
    </location>
</feature>
<feature type="disulfide bond" evidence="1">
    <location>
        <begin position="78"/>
        <end position="122"/>
    </location>
</feature>
<feature type="disulfide bond" description="Interchain" evidence="1">
    <location>
        <position position="81"/>
    </location>
</feature>
<feature type="disulfide bond" evidence="1">
    <location>
        <begin position="82"/>
        <end position="124"/>
    </location>
</feature>
<feature type="splice variant" id="VSP_004637" description="In isoform VEGF-B167." evidence="4">
    <original>RASTPHHRPQPRSVPGWDPAPGAPSPADITHPTPAPGPSAHAAPSAASALTP</original>
    <variation>SPRPLCPRCPQRRQRPDPRTCHCRCRRRSFLRCQGRGLELNPDTCRCRKLRR</variation>
    <location>
        <begin position="137"/>
        <end position="188"/>
    </location>
</feature>
<feature type="splice variant" id="VSP_004638" description="In isoform VEGF-B167." evidence="4">
    <location>
        <begin position="189"/>
        <end position="207"/>
    </location>
</feature>
<keyword id="KW-0025">Alternative splicing</keyword>
<keyword id="KW-1015">Disulfide bond</keyword>
<keyword id="KW-0325">Glycoprotein</keyword>
<keyword id="KW-0339">Growth factor</keyword>
<keyword id="KW-0358">Heparin-binding</keyword>
<keyword id="KW-0497">Mitogen</keyword>
<keyword id="KW-1185">Reference proteome</keyword>
<keyword id="KW-0964">Secreted</keyword>
<keyword id="KW-0732">Signal</keyword>
<dbReference type="EMBL" id="AB004274">
    <property type="protein sequence ID" value="BAA77686.1"/>
    <property type="molecule type" value="mRNA"/>
</dbReference>
<dbReference type="EMBL" id="AB004273">
    <property type="protein sequence ID" value="BAA77685.1"/>
    <property type="molecule type" value="mRNA"/>
</dbReference>
<dbReference type="EMBL" id="AF099134">
    <property type="protein sequence ID" value="AAG29746.1"/>
    <property type="molecule type" value="mRNA"/>
</dbReference>
<dbReference type="RefSeq" id="NP_776912.1">
    <molecule id="Q9XS49-2"/>
    <property type="nucleotide sequence ID" value="NM_174487.2"/>
</dbReference>
<dbReference type="RefSeq" id="XP_024842753.1">
    <molecule id="Q9XS49-1"/>
    <property type="nucleotide sequence ID" value="XM_024986985.2"/>
</dbReference>
<dbReference type="SMR" id="Q9XS49"/>
<dbReference type="FunCoup" id="Q9XS49">
    <property type="interactions" value="526"/>
</dbReference>
<dbReference type="STRING" id="9913.ENSBTAP00000018089"/>
<dbReference type="PaxDb" id="9913-ENSBTAP00000018089"/>
<dbReference type="GeneID" id="282121"/>
<dbReference type="KEGG" id="bta:282121"/>
<dbReference type="CTD" id="7423"/>
<dbReference type="VEuPathDB" id="HostDB:ENSBTAG00000047567"/>
<dbReference type="eggNOG" id="ENOG502SU5Y">
    <property type="taxonomic scope" value="Eukaryota"/>
</dbReference>
<dbReference type="HOGENOM" id="CLU_1331530_0_0_1"/>
<dbReference type="InParanoid" id="Q9XS49"/>
<dbReference type="OMA" id="KCEATRT"/>
<dbReference type="OrthoDB" id="6370328at2759"/>
<dbReference type="Reactome" id="R-BTA-114608">
    <property type="pathway name" value="Platelet degranulation"/>
</dbReference>
<dbReference type="Reactome" id="R-BTA-194313">
    <property type="pathway name" value="VEGF ligand-receptor interactions"/>
</dbReference>
<dbReference type="Reactome" id="R-BTA-195399">
    <property type="pathway name" value="VEGF binds to VEGFR leading to receptor dimerization"/>
</dbReference>
<dbReference type="Proteomes" id="UP000009136">
    <property type="component" value="Chromosome 29"/>
</dbReference>
<dbReference type="Bgee" id="ENSBTAG00000047567">
    <property type="expression patterns" value="Expressed in laryngeal cartilage and 104 other cell types or tissues"/>
</dbReference>
<dbReference type="GO" id="GO:0005615">
    <property type="term" value="C:extracellular space"/>
    <property type="evidence" value="ECO:0000318"/>
    <property type="project" value="GO_Central"/>
</dbReference>
<dbReference type="GO" id="GO:0016020">
    <property type="term" value="C:membrane"/>
    <property type="evidence" value="ECO:0007669"/>
    <property type="project" value="InterPro"/>
</dbReference>
<dbReference type="GO" id="GO:0042056">
    <property type="term" value="F:chemoattractant activity"/>
    <property type="evidence" value="ECO:0000318"/>
    <property type="project" value="GO_Central"/>
</dbReference>
<dbReference type="GO" id="GO:0008083">
    <property type="term" value="F:growth factor activity"/>
    <property type="evidence" value="ECO:0000318"/>
    <property type="project" value="GO_Central"/>
</dbReference>
<dbReference type="GO" id="GO:0008201">
    <property type="term" value="F:heparin binding"/>
    <property type="evidence" value="ECO:0007669"/>
    <property type="project" value="UniProtKB-KW"/>
</dbReference>
<dbReference type="GO" id="GO:0005172">
    <property type="term" value="F:vascular endothelial growth factor receptor binding"/>
    <property type="evidence" value="ECO:0000318"/>
    <property type="project" value="GO_Central"/>
</dbReference>
<dbReference type="GO" id="GO:0050930">
    <property type="term" value="P:induction of positive chemotaxis"/>
    <property type="evidence" value="ECO:0000318"/>
    <property type="project" value="GO_Central"/>
</dbReference>
<dbReference type="GO" id="GO:0051781">
    <property type="term" value="P:positive regulation of cell division"/>
    <property type="evidence" value="ECO:0007669"/>
    <property type="project" value="UniProtKB-KW"/>
</dbReference>
<dbReference type="GO" id="GO:0060754">
    <property type="term" value="P:positive regulation of mast cell chemotaxis"/>
    <property type="evidence" value="ECO:0000318"/>
    <property type="project" value="GO_Central"/>
</dbReference>
<dbReference type="GO" id="GO:0001666">
    <property type="term" value="P:response to hypoxia"/>
    <property type="evidence" value="ECO:0000318"/>
    <property type="project" value="GO_Central"/>
</dbReference>
<dbReference type="GO" id="GO:0002040">
    <property type="term" value="P:sprouting angiogenesis"/>
    <property type="evidence" value="ECO:0000318"/>
    <property type="project" value="GO_Central"/>
</dbReference>
<dbReference type="GO" id="GO:0048010">
    <property type="term" value="P:vascular endothelial growth factor receptor signaling pathway"/>
    <property type="evidence" value="ECO:0000318"/>
    <property type="project" value="GO_Central"/>
</dbReference>
<dbReference type="GO" id="GO:0038084">
    <property type="term" value="P:vascular endothelial growth factor signaling pathway"/>
    <property type="evidence" value="ECO:0000318"/>
    <property type="project" value="GO_Central"/>
</dbReference>
<dbReference type="CDD" id="cd00135">
    <property type="entry name" value="PDGF"/>
    <property type="match status" value="1"/>
</dbReference>
<dbReference type="FunFam" id="2.10.90.10:FF:000030">
    <property type="entry name" value="Vascular endothelial growth factor B"/>
    <property type="match status" value="1"/>
</dbReference>
<dbReference type="Gene3D" id="2.10.90.10">
    <property type="entry name" value="Cystine-knot cytokines"/>
    <property type="match status" value="1"/>
</dbReference>
<dbReference type="InterPro" id="IPR029034">
    <property type="entry name" value="Cystine-knot_cytokine"/>
</dbReference>
<dbReference type="InterPro" id="IPR023581">
    <property type="entry name" value="PD_growth_factor_CS"/>
</dbReference>
<dbReference type="InterPro" id="IPR000072">
    <property type="entry name" value="PDGF/VEGF_dom"/>
</dbReference>
<dbReference type="InterPro" id="IPR050507">
    <property type="entry name" value="PDGF/VEGF_growth_factor"/>
</dbReference>
<dbReference type="PANTHER" id="PTHR12025">
    <property type="entry name" value="VASCULAR ENDOTHELIAL GROWTH FACTOR"/>
    <property type="match status" value="1"/>
</dbReference>
<dbReference type="PANTHER" id="PTHR12025:SF12">
    <property type="entry name" value="VASCULAR ENDOTHELIAL GROWTH FACTOR B"/>
    <property type="match status" value="1"/>
</dbReference>
<dbReference type="Pfam" id="PF00341">
    <property type="entry name" value="PDGF"/>
    <property type="match status" value="1"/>
</dbReference>
<dbReference type="SMART" id="SM00141">
    <property type="entry name" value="PDGF"/>
    <property type="match status" value="1"/>
</dbReference>
<dbReference type="SUPFAM" id="SSF57501">
    <property type="entry name" value="Cystine-knot cytokines"/>
    <property type="match status" value="1"/>
</dbReference>
<dbReference type="PROSITE" id="PS00249">
    <property type="entry name" value="PDGF_1"/>
    <property type="match status" value="1"/>
</dbReference>
<dbReference type="PROSITE" id="PS50278">
    <property type="entry name" value="PDGF_2"/>
    <property type="match status" value="1"/>
</dbReference>
<proteinExistence type="evidence at transcript level"/>
<comment type="function">
    <text evidence="1">Growth factor for endothelial cells. VEGF-B167 binds heparin and neuropilin-1 whereas the binding to neuropilin-1 of VEGF-B186 is regulated by proteolysis (By similarity).</text>
</comment>
<comment type="subunit">
    <text evidence="1">Homodimer; disulfide-linked. Can also form heterodimer with VEGF (By similarity).</text>
</comment>
<comment type="subcellular location">
    <subcellularLocation>
        <location evidence="1">Secreted</location>
    </subcellularLocation>
    <text evidence="1">Secreted but remains associated to cells or to the extracellular matrix unless released by heparin.</text>
</comment>
<comment type="alternative products">
    <event type="alternative splicing"/>
    <isoform>
        <id>Q9XS49-1</id>
        <name>VEGF-B186</name>
        <sequence type="displayed"/>
    </isoform>
    <isoform>
        <id>Q9XS49-2</id>
        <name>VEGF-B167</name>
        <sequence type="described" ref="VSP_004637 VSP_004638"/>
    </isoform>
    <text>Additional isoforms seem to exist.</text>
</comment>
<comment type="PTM">
    <text evidence="1">VEGF-B186 is O-glycosylated.</text>
</comment>
<comment type="similarity">
    <text evidence="4">Belongs to the PDGF/VEGF growth factor family.</text>
</comment>
<reference key="1">
    <citation type="submission" date="1997-05" db="EMBL/GenBank/DDBJ databases">
        <title>Structure and expression of bovine VEGF family.</title>
        <authorList>
            <person name="Liu X."/>
            <person name="Yonekura H."/>
            <person name="Yamagishi S."/>
            <person name="Yamamoto Y."/>
            <person name="Yamamoto H."/>
        </authorList>
    </citation>
    <scope>NUCLEOTIDE SEQUENCE [MRNA]</scope>
    <source>
        <tissue>Heart</tissue>
    </source>
</reference>
<reference key="2">
    <citation type="submission" date="1998-10" db="EMBL/GenBank/DDBJ databases">
        <authorList>
            <person name="Mandriota S.J."/>
            <person name="Pepper M.S."/>
        </authorList>
    </citation>
    <scope>NUCLEOTIDE SEQUENCE [MRNA] OF 38-104</scope>
    <source>
        <tissue>Heart</tissue>
    </source>
</reference>